<proteinExistence type="evidence at transcript level"/>
<sequence>MASTTFSSAFSILSLPSSSPSPPPSPPRTLPVANRRRRAAAVASTATESPKVLELGDAIAGLTLEEARNLVDHLQERLCVSAASFPPAAAGLRAAAVEEAPVEQTEFDVVIEEVPSSARIATIKIVRALTNLALKEAKDLIEGLPKKLKEAVSKDEAEEAKKQLEGVGAKVSIA</sequence>
<gene>
    <name type="primary">RPL12-1</name>
</gene>
<evidence type="ECO:0000255" key="1"/>
<evidence type="ECO:0000256" key="2">
    <source>
        <dbReference type="SAM" id="MobiDB-lite"/>
    </source>
</evidence>
<evidence type="ECO:0000303" key="3">
    <source>
    </source>
</evidence>
<evidence type="ECO:0000305" key="4"/>
<protein>
    <recommendedName>
        <fullName evidence="4">Large ribosomal subunit protein bL12cz</fullName>
    </recommendedName>
    <alternativeName>
        <fullName evidence="4">50S ribosomal protein L12-1, chloroplastic</fullName>
    </alternativeName>
    <alternativeName>
        <fullName evidence="3">CL12-1</fullName>
    </alternativeName>
</protein>
<dbReference type="EMBL" id="X68325">
    <property type="protein sequence ID" value="CAA48400.1"/>
    <property type="status" value="ALT_SEQ"/>
    <property type="molecule type" value="mRNA"/>
</dbReference>
<dbReference type="PIR" id="S30199">
    <property type="entry name" value="S30199"/>
</dbReference>
<dbReference type="PIR" id="S30200">
    <property type="entry name" value="S30200"/>
</dbReference>
<dbReference type="SMR" id="Q06030"/>
<dbReference type="GO" id="GO:0009507">
    <property type="term" value="C:chloroplast"/>
    <property type="evidence" value="ECO:0007669"/>
    <property type="project" value="UniProtKB-SubCell"/>
</dbReference>
<dbReference type="GO" id="GO:1990904">
    <property type="term" value="C:ribonucleoprotein complex"/>
    <property type="evidence" value="ECO:0007669"/>
    <property type="project" value="UniProtKB-KW"/>
</dbReference>
<dbReference type="GO" id="GO:0005840">
    <property type="term" value="C:ribosome"/>
    <property type="evidence" value="ECO:0007669"/>
    <property type="project" value="UniProtKB-KW"/>
</dbReference>
<dbReference type="GO" id="GO:0003729">
    <property type="term" value="F:mRNA binding"/>
    <property type="evidence" value="ECO:0007669"/>
    <property type="project" value="TreeGrafter"/>
</dbReference>
<dbReference type="GO" id="GO:0003735">
    <property type="term" value="F:structural constituent of ribosome"/>
    <property type="evidence" value="ECO:0007669"/>
    <property type="project" value="InterPro"/>
</dbReference>
<dbReference type="GO" id="GO:0006412">
    <property type="term" value="P:translation"/>
    <property type="evidence" value="ECO:0007669"/>
    <property type="project" value="InterPro"/>
</dbReference>
<dbReference type="CDD" id="cd00387">
    <property type="entry name" value="Ribosomal_L7_L12"/>
    <property type="match status" value="1"/>
</dbReference>
<dbReference type="FunFam" id="3.30.1390.10:FF:000001">
    <property type="entry name" value="50S ribosomal protein L7/L12"/>
    <property type="match status" value="1"/>
</dbReference>
<dbReference type="Gene3D" id="3.30.1390.10">
    <property type="match status" value="1"/>
</dbReference>
<dbReference type="Gene3D" id="1.20.5.710">
    <property type="entry name" value="Single helix bin"/>
    <property type="match status" value="1"/>
</dbReference>
<dbReference type="HAMAP" id="MF_00368">
    <property type="entry name" value="Ribosomal_bL12"/>
    <property type="match status" value="1"/>
</dbReference>
<dbReference type="InterPro" id="IPR000206">
    <property type="entry name" value="Ribosomal_bL12"/>
</dbReference>
<dbReference type="InterPro" id="IPR013823">
    <property type="entry name" value="Ribosomal_bL12_C"/>
</dbReference>
<dbReference type="InterPro" id="IPR014719">
    <property type="entry name" value="Ribosomal_bL12_C/ClpS-like"/>
</dbReference>
<dbReference type="InterPro" id="IPR008932">
    <property type="entry name" value="Ribosomal_bL12_oligo"/>
</dbReference>
<dbReference type="InterPro" id="IPR036235">
    <property type="entry name" value="Ribosomal_bL12_oligo_N_sf"/>
</dbReference>
<dbReference type="NCBIfam" id="TIGR00855">
    <property type="entry name" value="L12"/>
    <property type="match status" value="1"/>
</dbReference>
<dbReference type="PANTHER" id="PTHR45987">
    <property type="entry name" value="39S RIBOSOMAL PROTEIN L12"/>
    <property type="match status" value="1"/>
</dbReference>
<dbReference type="PANTHER" id="PTHR45987:SF25">
    <property type="entry name" value="LARGE RIBOSOMAL SUBUNIT PROTEIN BL12C"/>
    <property type="match status" value="1"/>
</dbReference>
<dbReference type="Pfam" id="PF00542">
    <property type="entry name" value="Ribosomal_L12"/>
    <property type="match status" value="1"/>
</dbReference>
<dbReference type="Pfam" id="PF16320">
    <property type="entry name" value="Ribosomal_L12_N"/>
    <property type="match status" value="1"/>
</dbReference>
<dbReference type="SUPFAM" id="SSF54736">
    <property type="entry name" value="ClpS-like"/>
    <property type="match status" value="1"/>
</dbReference>
<dbReference type="SUPFAM" id="SSF48300">
    <property type="entry name" value="Ribosomal protein L7/12, oligomerisation (N-terminal) domain"/>
    <property type="match status" value="1"/>
</dbReference>
<comment type="subcellular location">
    <subcellularLocation>
        <location evidence="4">Plastid</location>
        <location evidence="4">Chloroplast</location>
    </subcellularLocation>
</comment>
<comment type="similarity">
    <text evidence="4">Belongs to the bacterial ribosomal protein bL12 family.</text>
</comment>
<organism>
    <name type="scientific">Secale cereale</name>
    <name type="common">Rye</name>
    <dbReference type="NCBI Taxonomy" id="4550"/>
    <lineage>
        <taxon>Eukaryota</taxon>
        <taxon>Viridiplantae</taxon>
        <taxon>Streptophyta</taxon>
        <taxon>Embryophyta</taxon>
        <taxon>Tracheophyta</taxon>
        <taxon>Spermatophyta</taxon>
        <taxon>Magnoliopsida</taxon>
        <taxon>Liliopsida</taxon>
        <taxon>Poales</taxon>
        <taxon>Poaceae</taxon>
        <taxon>BOP clade</taxon>
        <taxon>Pooideae</taxon>
        <taxon>Triticodae</taxon>
        <taxon>Triticeae</taxon>
        <taxon>Hordeinae</taxon>
        <taxon>Secale</taxon>
    </lineage>
</organism>
<accession>Q06030</accession>
<name>RK121_SECCE</name>
<reference key="1">
    <citation type="journal article" date="1993" name="Biochim. Biophys. Acta">
        <title>Identification of the nuclear-encoded chloroplast ribosomal protein L12 of the monocotyledonous plant Secale cereale and sequencing of two different cDNAs with strong codon bias.</title>
        <authorList>
            <person name="Schmidt M.W."/>
            <person name="Pichl L."/>
            <person name="Lepper M."/>
            <person name="Feierabend J."/>
        </authorList>
    </citation>
    <scope>NUCLEOTIDE SEQUENCE [MRNA]</scope>
    <source>
        <strain>cv. Halo</strain>
        <tissue>Leaf</tissue>
    </source>
</reference>
<feature type="transit peptide" description="Chloroplast" evidence="1">
    <location>
        <begin position="1"/>
        <end position="45"/>
    </location>
</feature>
<feature type="chain" id="PRO_0000030452" description="Large ribosomal subunit protein bL12cz">
    <location>
        <begin position="46"/>
        <end position="174"/>
    </location>
</feature>
<feature type="region of interest" description="Disordered" evidence="2">
    <location>
        <begin position="1"/>
        <end position="46"/>
    </location>
</feature>
<feature type="compositionally biased region" description="Low complexity" evidence="2">
    <location>
        <begin position="7"/>
        <end position="18"/>
    </location>
</feature>
<feature type="compositionally biased region" description="Pro residues" evidence="2">
    <location>
        <begin position="19"/>
        <end position="29"/>
    </location>
</feature>
<keyword id="KW-0150">Chloroplast</keyword>
<keyword id="KW-0934">Plastid</keyword>
<keyword id="KW-0687">Ribonucleoprotein</keyword>
<keyword id="KW-0689">Ribosomal protein</keyword>
<keyword id="KW-0809">Transit peptide</keyword>